<accession>C4ZBV4</accession>
<comment type="function">
    <text evidence="1">Could be involved in septation.</text>
</comment>
<comment type="similarity">
    <text evidence="1">Belongs to the SpoVG family.</text>
</comment>
<dbReference type="EMBL" id="CP001107">
    <property type="protein sequence ID" value="ACR74244.1"/>
    <property type="molecule type" value="Genomic_DNA"/>
</dbReference>
<dbReference type="RefSeq" id="WP_012741361.1">
    <property type="nucleotide sequence ID" value="NC_012781.1"/>
</dbReference>
<dbReference type="SMR" id="C4ZBV4"/>
<dbReference type="STRING" id="515619.EUBREC_0453"/>
<dbReference type="PaxDb" id="515619-EUBREC_0453"/>
<dbReference type="GeneID" id="86987364"/>
<dbReference type="KEGG" id="ere:EUBREC_0453"/>
<dbReference type="HOGENOM" id="CLU_103669_2_1_9"/>
<dbReference type="Proteomes" id="UP000001477">
    <property type="component" value="Chromosome"/>
</dbReference>
<dbReference type="GO" id="GO:0000917">
    <property type="term" value="P:division septum assembly"/>
    <property type="evidence" value="ECO:0007669"/>
    <property type="project" value="UniProtKB-KW"/>
</dbReference>
<dbReference type="GO" id="GO:0030435">
    <property type="term" value="P:sporulation resulting in formation of a cellular spore"/>
    <property type="evidence" value="ECO:0007669"/>
    <property type="project" value="InterPro"/>
</dbReference>
<dbReference type="Gene3D" id="3.30.1120.40">
    <property type="entry name" value="Stage V sporulation protein G"/>
    <property type="match status" value="1"/>
</dbReference>
<dbReference type="HAMAP" id="MF_00819">
    <property type="entry name" value="SpoVG"/>
    <property type="match status" value="1"/>
</dbReference>
<dbReference type="InterPro" id="IPR007170">
    <property type="entry name" value="SpoVG"/>
</dbReference>
<dbReference type="InterPro" id="IPR036751">
    <property type="entry name" value="SpoVG_sf"/>
</dbReference>
<dbReference type="NCBIfam" id="NF009749">
    <property type="entry name" value="PRK13259.1"/>
    <property type="match status" value="1"/>
</dbReference>
<dbReference type="PANTHER" id="PTHR38429">
    <property type="entry name" value="SEPTATION PROTEIN SPOVG-RELATED"/>
    <property type="match status" value="1"/>
</dbReference>
<dbReference type="PANTHER" id="PTHR38429:SF1">
    <property type="entry name" value="SEPTATION PROTEIN SPOVG-RELATED"/>
    <property type="match status" value="1"/>
</dbReference>
<dbReference type="Pfam" id="PF04026">
    <property type="entry name" value="SpoVG"/>
    <property type="match status" value="1"/>
</dbReference>
<dbReference type="SUPFAM" id="SSF160537">
    <property type="entry name" value="SpoVG-like"/>
    <property type="match status" value="1"/>
</dbReference>
<name>SP5G_AGARV</name>
<keyword id="KW-0131">Cell cycle</keyword>
<keyword id="KW-0132">Cell division</keyword>
<keyword id="KW-0717">Septation</keyword>
<protein>
    <recommendedName>
        <fullName evidence="1">Putative septation protein SpoVG</fullName>
    </recommendedName>
</protein>
<gene>
    <name evidence="1" type="primary">spoVG</name>
    <name type="ordered locus">EUBREC_0453</name>
</gene>
<organism>
    <name type="scientific">Agathobacter rectalis (strain ATCC 33656 / DSM 3377 / JCM 17463 / KCTC 5835 / VPI 0990)</name>
    <name type="common">Eubacterium rectale</name>
    <dbReference type="NCBI Taxonomy" id="515619"/>
    <lineage>
        <taxon>Bacteria</taxon>
        <taxon>Bacillati</taxon>
        <taxon>Bacillota</taxon>
        <taxon>Clostridia</taxon>
        <taxon>Lachnospirales</taxon>
        <taxon>Lachnospiraceae</taxon>
        <taxon>Agathobacter</taxon>
    </lineage>
</organism>
<sequence length="87" mass="10016">MQITDIRIRKVEKEGKMKAVVSITIDDEFVVHDIKVIEGEKGLFIAMPSRKANDGEYRDIAHPINSATRENIQNMILEKYKTEIENV</sequence>
<feature type="chain" id="PRO_1000213099" description="Putative septation protein SpoVG">
    <location>
        <begin position="1"/>
        <end position="87"/>
    </location>
</feature>
<reference key="1">
    <citation type="journal article" date="2009" name="Proc. Natl. Acad. Sci. U.S.A.">
        <title>Characterizing a model human gut microbiota composed of members of its two dominant bacterial phyla.</title>
        <authorList>
            <person name="Mahowald M.A."/>
            <person name="Rey F.E."/>
            <person name="Seedorf H."/>
            <person name="Turnbaugh P.J."/>
            <person name="Fulton R.S."/>
            <person name="Wollam A."/>
            <person name="Shah N."/>
            <person name="Wang C."/>
            <person name="Magrini V."/>
            <person name="Wilson R.K."/>
            <person name="Cantarel B.L."/>
            <person name="Coutinho P.M."/>
            <person name="Henrissat B."/>
            <person name="Crock L.W."/>
            <person name="Russell A."/>
            <person name="Verberkmoes N.C."/>
            <person name="Hettich R.L."/>
            <person name="Gordon J.I."/>
        </authorList>
    </citation>
    <scope>NUCLEOTIDE SEQUENCE [LARGE SCALE GENOMIC DNA]</scope>
    <source>
        <strain>ATCC 33656 / DSM 3377 / JCM 17463 / KCTC 5835 / LMG 30912 / VPI 0990</strain>
    </source>
</reference>
<evidence type="ECO:0000255" key="1">
    <source>
        <dbReference type="HAMAP-Rule" id="MF_00819"/>
    </source>
</evidence>
<proteinExistence type="inferred from homology"/>